<comment type="function">
    <text evidence="1">Gamma-conotoxins may act on voltage-gated non-specific cation pacemaker channels (HCN).</text>
</comment>
<comment type="subcellular location">
    <subcellularLocation>
        <location evidence="4">Secreted</location>
    </subcellularLocation>
</comment>
<comment type="tissue specificity">
    <text evidence="7">Expressed by the venom duct.</text>
</comment>
<comment type="domain">
    <text evidence="6">The cysteine framework is VI/VII (C-C-CC-C-C).</text>
</comment>
<comment type="domain">
    <text evidence="6">The presence of a 'disulfide through disulfide knot' structurally defines this protein as a knottin.</text>
</comment>
<comment type="PTM">
    <text evidence="4">Three forms of this peptides have been described. The unmodified Am6.1a (Am3286) is not detected in the venom; Am6.1b (Am3408) is only Trp brominated, while Am6.1c (Am3452) is both Trp brominated and Glu gamma-carboxyglutamated. Both Am6.1b and Am6.1c are detected in the venom.</text>
</comment>
<comment type="similarity">
    <text evidence="6">Belongs to the conotoxin O2 family.</text>
</comment>
<evidence type="ECO:0000250" key="1">
    <source>
        <dbReference type="UniProtKB" id="P56711"/>
    </source>
</evidence>
<evidence type="ECO:0000250" key="2">
    <source>
        <dbReference type="UniProtKB" id="Q26443"/>
    </source>
</evidence>
<evidence type="ECO:0000255" key="3"/>
<evidence type="ECO:0000269" key="4">
    <source>
    </source>
</evidence>
<evidence type="ECO:0000303" key="5">
    <source>
    </source>
</evidence>
<evidence type="ECO:0000305" key="6"/>
<evidence type="ECO:0000305" key="7">
    <source>
    </source>
</evidence>
<dbReference type="EMBL" id="MG721537">
    <property type="protein sequence ID" value="AVH76830.1"/>
    <property type="molecule type" value="Genomic_DNA"/>
</dbReference>
<dbReference type="GO" id="GO:0005576">
    <property type="term" value="C:extracellular region"/>
    <property type="evidence" value="ECO:0007669"/>
    <property type="project" value="UniProtKB-SubCell"/>
</dbReference>
<dbReference type="GO" id="GO:0008200">
    <property type="term" value="F:ion channel inhibitor activity"/>
    <property type="evidence" value="ECO:0007669"/>
    <property type="project" value="InterPro"/>
</dbReference>
<dbReference type="GO" id="GO:0090729">
    <property type="term" value="F:toxin activity"/>
    <property type="evidence" value="ECO:0007669"/>
    <property type="project" value="UniProtKB-KW"/>
</dbReference>
<dbReference type="InterPro" id="IPR004214">
    <property type="entry name" value="Conotoxin"/>
</dbReference>
<dbReference type="Pfam" id="PF02950">
    <property type="entry name" value="Conotoxin"/>
    <property type="match status" value="1"/>
</dbReference>
<protein>
    <recommendedName>
        <fullName evidence="5">Conotoxin Am6.1</fullName>
    </recommendedName>
    <alternativeName>
        <fullName evidence="5">Am3286</fullName>
    </alternativeName>
    <alternativeName>
        <fullName evidence="5">Am3408</fullName>
    </alternativeName>
    <alternativeName>
        <fullName evidence="5">Am3452</fullName>
    </alternativeName>
    <alternativeName>
        <fullName evidence="5">Am6.1a</fullName>
    </alternativeName>
    <alternativeName>
        <fullName evidence="5">Am6.1b</fullName>
    </alternativeName>
    <alternativeName>
        <fullName evidence="5">Am6.1c</fullName>
    </alternativeName>
</protein>
<accession>A0A2L2P6T1</accession>
<organism>
    <name type="scientific">Conus amadis</name>
    <name type="common">Amadis cone</name>
    <dbReference type="NCBI Taxonomy" id="198732"/>
    <lineage>
        <taxon>Eukaryota</taxon>
        <taxon>Metazoa</taxon>
        <taxon>Spiralia</taxon>
        <taxon>Lophotrochozoa</taxon>
        <taxon>Mollusca</taxon>
        <taxon>Gastropoda</taxon>
        <taxon>Caenogastropoda</taxon>
        <taxon>Neogastropoda</taxon>
        <taxon>Conoidea</taxon>
        <taxon>Conidae</taxon>
        <taxon>Conus</taxon>
        <taxon>Leptoconus</taxon>
    </lineage>
</organism>
<proteinExistence type="evidence at protein level"/>
<reference key="1">
    <citation type="journal article" date="2018" name="Toxicon">
        <title>Mass spectrometric identification of bromotryptophan containing conotoxin sequences from the venom of C.amadis.</title>
        <authorList>
            <person name="Vijayasarathy M."/>
            <person name="Balaram P."/>
        </authorList>
    </citation>
    <scope>NUCLEOTIDE SEQUENCE [GENOMIC DNA / MRNA]</scope>
    <scope>PROTEIN SEQUENCE OF 48-77</scope>
    <scope>BROMINATION AT TRP-51</scope>
    <scope>GAMMA-CARBOXYGLUTAMATION AT GLU-60 AND GLU-64</scope>
    <scope>IDENTIFICATION BY MASS SPECTROMETRY</scope>
    <scope>SUBCELLULAR LOCATION</scope>
    <source>
        <tissue>Venom</tissue>
        <tissue>Venom duct</tissue>
    </source>
</reference>
<feature type="signal peptide" evidence="3">
    <location>
        <begin position="1"/>
        <end position="19"/>
    </location>
</feature>
<feature type="propeptide" id="PRO_0000453597" evidence="7">
    <location>
        <begin position="20"/>
        <end position="47"/>
    </location>
</feature>
<feature type="peptide" id="PRO_5014623542" description="Conotoxin Am6.1" evidence="4">
    <location>
        <begin position="48"/>
        <end position="77"/>
    </location>
</feature>
<feature type="propeptide" id="PRO_0000453598" evidence="7">
    <location>
        <begin position="78"/>
        <end position="84"/>
    </location>
</feature>
<feature type="modified residue" description="6'-bromotryptophan; in Am6.1b" evidence="4">
    <location>
        <position position="51"/>
    </location>
</feature>
<feature type="modified residue" description="4-carboxyglutamate; partial; in Am6.1b and Am6.1c" evidence="4">
    <location>
        <position position="60"/>
    </location>
</feature>
<feature type="modified residue" description="4-carboxyglutamate; partial; in Am6.1b and Am6.1c" evidence="4">
    <location>
        <position position="64"/>
    </location>
</feature>
<feature type="disulfide bond" evidence="2">
    <location>
        <begin position="48"/>
        <end position="62"/>
    </location>
</feature>
<feature type="disulfide bond" evidence="2">
    <location>
        <begin position="55"/>
        <end position="66"/>
    </location>
</feature>
<feature type="disulfide bond" evidence="2">
    <location>
        <begin position="61"/>
        <end position="71"/>
    </location>
</feature>
<sequence length="84" mass="9373">MEKLTILLLVAAVLMSTHAMFQGGGEKSRKAINFSETRKLARNKQKRCDGWSTYCHDDSECCSETCANSYCTLIKGVRTTSHPI</sequence>
<keyword id="KW-0102">Bromination</keyword>
<keyword id="KW-0165">Cleavage on pair of basic residues</keyword>
<keyword id="KW-0903">Direct protein sequencing</keyword>
<keyword id="KW-1015">Disulfide bond</keyword>
<keyword id="KW-0301">Gamma-carboxyglutamic acid</keyword>
<keyword id="KW-0872">Ion channel impairing toxin</keyword>
<keyword id="KW-0960">Knottin</keyword>
<keyword id="KW-0964">Secreted</keyword>
<keyword id="KW-0732">Signal</keyword>
<keyword id="KW-0800">Toxin</keyword>
<name>O261_CONAA</name>